<comment type="function">
    <text evidence="1">Regulatory subunit of S-adenosylmethionine synthetase 2, an enzyme that catalyzes the formation of S-adenosylmethionine from methionine and ATP. Regulates MAT2A catalytic activity by changing its kinetic properties, increasing its affinity for L-methionine. Can bind NADP (in vitro).</text>
</comment>
<comment type="pathway">
    <text evidence="1">Amino-acid biosynthesis; S-adenosyl-L-methionine biosynthesis; S-adenosyl-L-methionine from L-methionine: step 1/1.</text>
</comment>
<comment type="subunit">
    <text evidence="1">Heterotrimer; composed of a catalytic MAT2A homodimer that binds one regulatory MAT2B chain. Heterohexamer; composed of a central, catalytic MAT2A homotetramer flanked on either side by a regulatory MAT2B chain. NADP binding increases the affinity for MAT2A.</text>
</comment>
<comment type="similarity">
    <text evidence="2">Belongs to the dTDP-4-dehydrorhamnose reductase family. MAT2B subfamily.</text>
</comment>
<reference key="1">
    <citation type="submission" date="2006-02" db="EMBL/GenBank/DDBJ databases">
        <authorList>
            <consortium name="NIH - Mammalian Gene Collection (MGC) project"/>
        </authorList>
    </citation>
    <scope>NUCLEOTIDE SEQUENCE [LARGE SCALE MRNA]</scope>
    <source>
        <strain>Hereford</strain>
        <tissue>Hypothalamus</tissue>
    </source>
</reference>
<proteinExistence type="evidence at transcript level"/>
<sequence length="334" mass="37768">MVGREKELSIHFVPGDCRLVEEEVNIPNRRVLITGATGLLGRAVYKEFQQNNWHAVGCGFRRARPKFEQVNLLDSNAVHHIIYDFQPHVIVHCAAERRPDVVENHPDAASQLNVDASGNLAKEAAAIGAFLIYISSDYVFDGTNPPYREEDIPNPLNLYGKTKLEGEKAVLENNLGAAVLRIPVLYGEVERLEESAVTIMFDKVQFSNKSANMDHWQQRFPTHVKDVATVCRQLAEKRMLDPSIKGTFHWSGNEQMTKYEMACAIADAFNLPSSHLRPITDSPVVGAQRPRNAQLDCSRLETLGIGQRTPFRIGIKESLWPFLIDKRWRQTVFH</sequence>
<name>MAT2B_BOVIN</name>
<keyword id="KW-0521">NADP</keyword>
<keyword id="KW-0554">One-carbon metabolism</keyword>
<keyword id="KW-0597">Phosphoprotein</keyword>
<keyword id="KW-1185">Reference proteome</keyword>
<organism>
    <name type="scientific">Bos taurus</name>
    <name type="common">Bovine</name>
    <dbReference type="NCBI Taxonomy" id="9913"/>
    <lineage>
        <taxon>Eukaryota</taxon>
        <taxon>Metazoa</taxon>
        <taxon>Chordata</taxon>
        <taxon>Craniata</taxon>
        <taxon>Vertebrata</taxon>
        <taxon>Euteleostomi</taxon>
        <taxon>Mammalia</taxon>
        <taxon>Eutheria</taxon>
        <taxon>Laurasiatheria</taxon>
        <taxon>Artiodactyla</taxon>
        <taxon>Ruminantia</taxon>
        <taxon>Pecora</taxon>
        <taxon>Bovidae</taxon>
        <taxon>Bovinae</taxon>
        <taxon>Bos</taxon>
    </lineage>
</organism>
<evidence type="ECO:0000250" key="1">
    <source>
        <dbReference type="UniProtKB" id="Q9NZL9"/>
    </source>
</evidence>
<evidence type="ECO:0000305" key="2"/>
<protein>
    <recommendedName>
        <fullName>Methionine adenosyltransferase 2 subunit beta</fullName>
    </recommendedName>
    <alternativeName>
        <fullName>Methionine adenosyltransferase II beta</fullName>
        <shortName>MAT II beta</shortName>
    </alternativeName>
</protein>
<gene>
    <name type="primary">MAT2B</name>
</gene>
<accession>Q29RI9</accession>
<feature type="chain" id="PRO_0000287519" description="Methionine adenosyltransferase 2 subunit beta">
    <location>
        <begin position="1"/>
        <end position="334"/>
    </location>
</feature>
<feature type="region of interest" description="Required for interaction with MAT2A" evidence="1">
    <location>
        <begin position="319"/>
        <end position="334"/>
    </location>
</feature>
<feature type="binding site" evidence="1">
    <location>
        <begin position="37"/>
        <end position="40"/>
    </location>
    <ligand>
        <name>NADP(+)</name>
        <dbReference type="ChEBI" id="CHEBI:58349"/>
    </ligand>
</feature>
<feature type="binding site" evidence="1">
    <location>
        <begin position="60"/>
        <end position="62"/>
    </location>
    <ligand>
        <name>NADP(+)</name>
        <dbReference type="ChEBI" id="CHEBI:58349"/>
    </ligand>
</feature>
<feature type="binding site" evidence="1">
    <location>
        <begin position="71"/>
        <end position="72"/>
    </location>
    <ligand>
        <name>NADP(+)</name>
        <dbReference type="ChEBI" id="CHEBI:58349"/>
    </ligand>
</feature>
<feature type="binding site" evidence="1">
    <location>
        <position position="93"/>
    </location>
    <ligand>
        <name>NADP(+)</name>
        <dbReference type="ChEBI" id="CHEBI:58349"/>
    </ligand>
</feature>
<feature type="binding site" evidence="1">
    <location>
        <position position="97"/>
    </location>
    <ligand>
        <name>NADP(+)</name>
        <dbReference type="ChEBI" id="CHEBI:58349"/>
    </ligand>
</feature>
<feature type="binding site" evidence="1">
    <location>
        <position position="159"/>
    </location>
    <ligand>
        <name>NADP(+)</name>
        <dbReference type="ChEBI" id="CHEBI:58349"/>
    </ligand>
</feature>
<feature type="binding site" evidence="1">
    <location>
        <position position="185"/>
    </location>
    <ligand>
        <name>NADP(+)</name>
        <dbReference type="ChEBI" id="CHEBI:58349"/>
    </ligand>
</feature>
<feature type="modified residue" description="Phosphothreonine" evidence="1">
    <location>
        <position position="309"/>
    </location>
</feature>
<dbReference type="EMBL" id="BC114151">
    <property type="protein sequence ID" value="AAI14152.1"/>
    <property type="molecule type" value="mRNA"/>
</dbReference>
<dbReference type="RefSeq" id="NP_001039991.1">
    <property type="nucleotide sequence ID" value="NM_001046526.2"/>
</dbReference>
<dbReference type="SMR" id="Q29RI9"/>
<dbReference type="FunCoup" id="Q29RI9">
    <property type="interactions" value="1685"/>
</dbReference>
<dbReference type="STRING" id="9913.ENSBTAP00000016399"/>
<dbReference type="PaxDb" id="9913-ENSBTAP00000016399"/>
<dbReference type="GeneID" id="614177"/>
<dbReference type="KEGG" id="bta:614177"/>
<dbReference type="CTD" id="27430"/>
<dbReference type="VEuPathDB" id="HostDB:ENSBTAG00000012350"/>
<dbReference type="eggNOG" id="KOG1430">
    <property type="taxonomic scope" value="Eukaryota"/>
</dbReference>
<dbReference type="HOGENOM" id="CLU_045518_0_0_1"/>
<dbReference type="InParanoid" id="Q29RI9"/>
<dbReference type="OMA" id="RMPLMFG"/>
<dbReference type="OrthoDB" id="6235964at2759"/>
<dbReference type="TreeFam" id="TF332849"/>
<dbReference type="Reactome" id="R-BTA-156581">
    <property type="pathway name" value="Methylation"/>
</dbReference>
<dbReference type="Reactome" id="R-BTA-5689880">
    <property type="pathway name" value="Ub-specific processing proteases"/>
</dbReference>
<dbReference type="UniPathway" id="UPA00315">
    <property type="reaction ID" value="UER00080"/>
</dbReference>
<dbReference type="Proteomes" id="UP000009136">
    <property type="component" value="Chromosome 7"/>
</dbReference>
<dbReference type="Bgee" id="ENSBTAG00000012350">
    <property type="expression patterns" value="Expressed in oocyte and 105 other cell types or tissues"/>
</dbReference>
<dbReference type="GO" id="GO:0048269">
    <property type="term" value="C:methionine adenosyltransferase complex"/>
    <property type="evidence" value="ECO:0000250"/>
    <property type="project" value="UniProtKB"/>
</dbReference>
<dbReference type="GO" id="GO:0048270">
    <property type="term" value="F:methionine adenosyltransferase regulator activity"/>
    <property type="evidence" value="ECO:0000250"/>
    <property type="project" value="UniProtKB"/>
</dbReference>
<dbReference type="GO" id="GO:0006730">
    <property type="term" value="P:one-carbon metabolic process"/>
    <property type="evidence" value="ECO:0007669"/>
    <property type="project" value="UniProtKB-KW"/>
</dbReference>
<dbReference type="GO" id="GO:0006556">
    <property type="term" value="P:S-adenosylmethionine biosynthetic process"/>
    <property type="evidence" value="ECO:0000250"/>
    <property type="project" value="UniProtKB"/>
</dbReference>
<dbReference type="CDD" id="cd05254">
    <property type="entry name" value="dTDP_HR_like_SDR_e"/>
    <property type="match status" value="1"/>
</dbReference>
<dbReference type="FunFam" id="3.40.50.720:FF:000133">
    <property type="entry name" value="Methionine adenosyltransferase 2 subunit beta"/>
    <property type="match status" value="1"/>
</dbReference>
<dbReference type="Gene3D" id="3.40.50.720">
    <property type="entry name" value="NAD(P)-binding Rossmann-like Domain"/>
    <property type="match status" value="1"/>
</dbReference>
<dbReference type="InterPro" id="IPR005913">
    <property type="entry name" value="dTDP_dehydrorham_reduct"/>
</dbReference>
<dbReference type="InterPro" id="IPR036291">
    <property type="entry name" value="NAD(P)-bd_dom_sf"/>
</dbReference>
<dbReference type="InterPro" id="IPR029903">
    <property type="entry name" value="RmlD-like-bd"/>
</dbReference>
<dbReference type="PANTHER" id="PTHR10491">
    <property type="entry name" value="DTDP-4-DEHYDRORHAMNOSE REDUCTASE"/>
    <property type="match status" value="1"/>
</dbReference>
<dbReference type="PANTHER" id="PTHR10491:SF4">
    <property type="entry name" value="METHIONINE ADENOSYLTRANSFERASE 2 SUBUNIT BETA"/>
    <property type="match status" value="1"/>
</dbReference>
<dbReference type="Pfam" id="PF04321">
    <property type="entry name" value="RmlD_sub_bind"/>
    <property type="match status" value="1"/>
</dbReference>
<dbReference type="SUPFAM" id="SSF51735">
    <property type="entry name" value="NAD(P)-binding Rossmann-fold domains"/>
    <property type="match status" value="1"/>
</dbReference>